<dbReference type="PIR" id="S21694">
    <property type="entry name" value="S21694"/>
</dbReference>
<dbReference type="SMR" id="P33248"/>
<dbReference type="iPTMnet" id="P33248"/>
<dbReference type="GO" id="GO:0005737">
    <property type="term" value="C:cytoplasm"/>
    <property type="evidence" value="ECO:0007669"/>
    <property type="project" value="UniProtKB-KW"/>
</dbReference>
<dbReference type="GO" id="GO:0005856">
    <property type="term" value="C:cytoskeleton"/>
    <property type="evidence" value="ECO:0007669"/>
    <property type="project" value="UniProtKB-SubCell"/>
</dbReference>
<dbReference type="GO" id="GO:0003785">
    <property type="term" value="F:actin monomer binding"/>
    <property type="evidence" value="ECO:0007669"/>
    <property type="project" value="InterPro"/>
</dbReference>
<dbReference type="GO" id="GO:0007015">
    <property type="term" value="P:actin filament organization"/>
    <property type="evidence" value="ECO:0007669"/>
    <property type="project" value="InterPro"/>
</dbReference>
<dbReference type="GO" id="GO:0030334">
    <property type="term" value="P:regulation of cell migration"/>
    <property type="evidence" value="ECO:0007669"/>
    <property type="project" value="TreeGrafter"/>
</dbReference>
<dbReference type="FunFam" id="1.20.5.520:FF:000001">
    <property type="entry name" value="Thymosin beta"/>
    <property type="match status" value="1"/>
</dbReference>
<dbReference type="Gene3D" id="1.20.5.520">
    <property type="entry name" value="Single helix bin"/>
    <property type="match status" value="1"/>
</dbReference>
<dbReference type="InterPro" id="IPR001152">
    <property type="entry name" value="Beta-thymosin"/>
</dbReference>
<dbReference type="InterPro" id="IPR038386">
    <property type="entry name" value="Beta-thymosin_sf"/>
</dbReference>
<dbReference type="PANTHER" id="PTHR12021">
    <property type="entry name" value="THYMOSIN BETA"/>
    <property type="match status" value="1"/>
</dbReference>
<dbReference type="PANTHER" id="PTHR12021:SF3">
    <property type="entry name" value="THYMOSIN BETA-4-LIKE"/>
    <property type="match status" value="1"/>
</dbReference>
<dbReference type="Pfam" id="PF01290">
    <property type="entry name" value="Thymosin"/>
    <property type="match status" value="1"/>
</dbReference>
<dbReference type="PIRSF" id="PIRSF001828">
    <property type="entry name" value="Thymosin_beta"/>
    <property type="match status" value="1"/>
</dbReference>
<dbReference type="SMART" id="SM00152">
    <property type="entry name" value="THY"/>
    <property type="match status" value="1"/>
</dbReference>
<dbReference type="PROSITE" id="PS00500">
    <property type="entry name" value="THYMOSIN_B4"/>
    <property type="match status" value="1"/>
</dbReference>
<organism>
    <name type="scientific">Lateolabrax japonicus</name>
    <name type="common">Japanese sea perch</name>
    <name type="synonym">Japanese sea bass</name>
    <dbReference type="NCBI Taxonomy" id="8164"/>
    <lineage>
        <taxon>Eukaryota</taxon>
        <taxon>Metazoa</taxon>
        <taxon>Chordata</taxon>
        <taxon>Craniata</taxon>
        <taxon>Vertebrata</taxon>
        <taxon>Euteleostomi</taxon>
        <taxon>Actinopterygii</taxon>
        <taxon>Neopterygii</taxon>
        <taxon>Teleostei</taxon>
        <taxon>Neoteleostei</taxon>
        <taxon>Acanthomorphata</taxon>
        <taxon>Eupercaria</taxon>
        <taxon>Acropomatiformes</taxon>
        <taxon>Lateolabracidae</taxon>
        <taxon>Lateolabrax</taxon>
    </lineage>
</organism>
<protein>
    <recommendedName>
        <fullName>Thymosin beta-12</fullName>
    </recommendedName>
</protein>
<evidence type="ECO:0000250" key="1"/>
<evidence type="ECO:0000256" key="2">
    <source>
        <dbReference type="SAM" id="MobiDB-lite"/>
    </source>
</evidence>
<evidence type="ECO:0000269" key="3">
    <source>
    </source>
</evidence>
<evidence type="ECO:0000305" key="4"/>
<accession>P33248</accession>
<feature type="initiator methionine" description="Removed" evidence="3">
    <location>
        <position position="1"/>
    </location>
</feature>
<feature type="chain" id="PRO_0000045938" description="Thymosin beta-12">
    <location>
        <begin position="2"/>
        <end position="44"/>
    </location>
</feature>
<feature type="region of interest" description="Disordered" evidence="2">
    <location>
        <begin position="1"/>
        <end position="44"/>
    </location>
</feature>
<feature type="compositionally biased region" description="Basic and acidic residues" evidence="2">
    <location>
        <begin position="1"/>
        <end position="25"/>
    </location>
</feature>
<feature type="compositionally biased region" description="Basic and acidic residues" evidence="2">
    <location>
        <begin position="33"/>
        <end position="44"/>
    </location>
</feature>
<feature type="modified residue" description="N-acetylserine" evidence="3">
    <location>
        <position position="2"/>
    </location>
</feature>
<keyword id="KW-0007">Acetylation</keyword>
<keyword id="KW-0009">Actin-binding</keyword>
<keyword id="KW-0963">Cytoplasm</keyword>
<keyword id="KW-0206">Cytoskeleton</keyword>
<keyword id="KW-0903">Direct protein sequencing</keyword>
<sequence>MSDKPDISEVTSFDKTKLKKTETQEKNPLPSKETIEQEKAAATS</sequence>
<reference key="1">
    <citation type="journal article" date="1992" name="Arch. Biochem. Biophys.">
        <title>Primary structure of thymosin beta 12, a new member of the beta-thymosin family isolated from perch liver.</title>
        <authorList>
            <person name="Low T.L.K."/>
            <person name="Liu D.T.-W."/>
            <person name="Jou J.-H."/>
        </authorList>
    </citation>
    <scope>PROTEIN SEQUENCE OF 2-44</scope>
    <scope>ACETYLATION AT SER-2</scope>
    <source>
        <tissue>Liver</tissue>
    </source>
</reference>
<proteinExistence type="evidence at protein level"/>
<comment type="function">
    <text evidence="1">Plays an important role in the organization of the cytoskeleton. Binds to and sequesters actin monomers (G actin) and therefore inhibits actin polymerization (By similarity).</text>
</comment>
<comment type="subcellular location">
    <subcellularLocation>
        <location>Cytoplasm</location>
        <location>Cytoskeleton</location>
    </subcellularLocation>
</comment>
<comment type="similarity">
    <text evidence="4">Belongs to the thymosin beta family.</text>
</comment>
<name>TYB12_LATJA</name>